<dbReference type="EMBL" id="DS027695">
    <property type="protein sequence ID" value="EAW19650.1"/>
    <property type="molecule type" value="Genomic_DNA"/>
</dbReference>
<dbReference type="RefSeq" id="XP_001261547.1">
    <property type="nucleotide sequence ID" value="XM_001261546.1"/>
</dbReference>
<dbReference type="STRING" id="331117.A1DCU0"/>
<dbReference type="GlyCosmos" id="A1DCU0">
    <property type="glycosylation" value="1 site, No reported glycans"/>
</dbReference>
<dbReference type="EnsemblFungi" id="EAW19650">
    <property type="protein sequence ID" value="EAW19650"/>
    <property type="gene ID" value="NFIA_027240"/>
</dbReference>
<dbReference type="GeneID" id="4588161"/>
<dbReference type="KEGG" id="nfi:NFIA_027240"/>
<dbReference type="VEuPathDB" id="FungiDB:NFIA_027240"/>
<dbReference type="eggNOG" id="ENOG502QQTG">
    <property type="taxonomic scope" value="Eukaryota"/>
</dbReference>
<dbReference type="HOGENOM" id="CLU_071622_0_0_1"/>
<dbReference type="OMA" id="YKPPQML"/>
<dbReference type="OrthoDB" id="5327821at2759"/>
<dbReference type="Proteomes" id="UP000006702">
    <property type="component" value="Unassembled WGS sequence"/>
</dbReference>
<dbReference type="GO" id="GO:0005789">
    <property type="term" value="C:endoplasmic reticulum membrane"/>
    <property type="evidence" value="ECO:0007669"/>
    <property type="project" value="UniProtKB-SubCell"/>
</dbReference>
<dbReference type="GO" id="GO:0051082">
    <property type="term" value="F:unfolded protein binding"/>
    <property type="evidence" value="ECO:0007669"/>
    <property type="project" value="TreeGrafter"/>
</dbReference>
<dbReference type="GO" id="GO:0006458">
    <property type="term" value="P:'de novo' protein folding"/>
    <property type="evidence" value="ECO:0007669"/>
    <property type="project" value="InterPro"/>
</dbReference>
<dbReference type="InterPro" id="IPR019623">
    <property type="entry name" value="Rot1"/>
</dbReference>
<dbReference type="PANTHER" id="PTHR28090">
    <property type="entry name" value="PROTEIN ROT1"/>
    <property type="match status" value="1"/>
</dbReference>
<dbReference type="PANTHER" id="PTHR28090:SF1">
    <property type="entry name" value="PROTEIN ROT1"/>
    <property type="match status" value="1"/>
</dbReference>
<dbReference type="Pfam" id="PF10681">
    <property type="entry name" value="Rot1"/>
    <property type="match status" value="1"/>
</dbReference>
<dbReference type="PIRSF" id="PIRSF017290">
    <property type="entry name" value="ROT1_prd"/>
    <property type="match status" value="1"/>
</dbReference>
<reference key="1">
    <citation type="journal article" date="2008" name="PLoS Genet.">
        <title>Genomic islands in the pathogenic filamentous fungus Aspergillus fumigatus.</title>
        <authorList>
            <person name="Fedorova N.D."/>
            <person name="Khaldi N."/>
            <person name="Joardar V.S."/>
            <person name="Maiti R."/>
            <person name="Amedeo P."/>
            <person name="Anderson M.J."/>
            <person name="Crabtree J."/>
            <person name="Silva J.C."/>
            <person name="Badger J.H."/>
            <person name="Albarraq A."/>
            <person name="Angiuoli S."/>
            <person name="Bussey H."/>
            <person name="Bowyer P."/>
            <person name="Cotty P.J."/>
            <person name="Dyer P.S."/>
            <person name="Egan A."/>
            <person name="Galens K."/>
            <person name="Fraser-Liggett C.M."/>
            <person name="Haas B.J."/>
            <person name="Inman J.M."/>
            <person name="Kent R."/>
            <person name="Lemieux S."/>
            <person name="Malavazi I."/>
            <person name="Orvis J."/>
            <person name="Roemer T."/>
            <person name="Ronning C.M."/>
            <person name="Sundaram J.P."/>
            <person name="Sutton G."/>
            <person name="Turner G."/>
            <person name="Venter J.C."/>
            <person name="White O.R."/>
            <person name="Whitty B.R."/>
            <person name="Youngman P."/>
            <person name="Wolfe K.H."/>
            <person name="Goldman G.H."/>
            <person name="Wortman J.R."/>
            <person name="Jiang B."/>
            <person name="Denning D.W."/>
            <person name="Nierman W.C."/>
        </authorList>
    </citation>
    <scope>NUCLEOTIDE SEQUENCE [LARGE SCALE GENOMIC DNA]</scope>
    <source>
        <strain>ATCC 1020 / DSM 3700 / CBS 544.65 / FGSC A1164 / JCM 1740 / NRRL 181 / WB 181</strain>
    </source>
</reference>
<protein>
    <recommendedName>
        <fullName>Protein rot1</fullName>
    </recommendedName>
</protein>
<organism>
    <name type="scientific">Neosartorya fischeri (strain ATCC 1020 / DSM 3700 / CBS 544.65 / FGSC A1164 / JCM 1740 / NRRL 181 / WB 181)</name>
    <name type="common">Aspergillus fischerianus</name>
    <dbReference type="NCBI Taxonomy" id="331117"/>
    <lineage>
        <taxon>Eukaryota</taxon>
        <taxon>Fungi</taxon>
        <taxon>Dikarya</taxon>
        <taxon>Ascomycota</taxon>
        <taxon>Pezizomycotina</taxon>
        <taxon>Eurotiomycetes</taxon>
        <taxon>Eurotiomycetidae</taxon>
        <taxon>Eurotiales</taxon>
        <taxon>Aspergillaceae</taxon>
        <taxon>Aspergillus</taxon>
        <taxon>Aspergillus subgen. Fumigati</taxon>
    </lineage>
</organism>
<evidence type="ECO:0000250" key="1"/>
<evidence type="ECO:0000255" key="2"/>
<evidence type="ECO:0000305" key="3"/>
<sequence length="236" mass="26194">MIVGYLLLNFLVAVVRASSVAELVGTWTTKSRTVVTGPDFYDPIDDKLLEPSLTGISYSFTADGYYEQAYYRAVSNPTTPSCPKGIMLWQHGKYAVMPDGSIQLTPIAVDGRQLVSDPCSKEVAMYTRYNQTEAFSSFTVSIDSYHHVKRLDLKAFDETPMPPMYLIFKPPQMLPTTTLNPVSSETGKSKRHIARDIGSPVGVDTLMRSDHIGDPGRWLWFGIFMTAMGGIALIYS</sequence>
<name>ROT1_NEOFI</name>
<keyword id="KW-0256">Endoplasmic reticulum</keyword>
<keyword id="KW-0325">Glycoprotein</keyword>
<keyword id="KW-0472">Membrane</keyword>
<keyword id="KW-1185">Reference proteome</keyword>
<keyword id="KW-0732">Signal</keyword>
<keyword id="KW-0812">Transmembrane</keyword>
<keyword id="KW-1133">Transmembrane helix</keyword>
<gene>
    <name type="primary">rot1</name>
    <name type="ORF">NFIA_027240</name>
</gene>
<accession>A1DCU0</accession>
<proteinExistence type="inferred from homology"/>
<comment type="function">
    <text evidence="1">Required for normal levels of the cell wall 1,6-beta-glucan. Involved in a protein folding machinery chaperoning proteins acting in various physiological processes including cell wall synthesis and lysis of autophagic bodies (By similarity).</text>
</comment>
<comment type="subcellular location">
    <subcellularLocation>
        <location evidence="1">Endoplasmic reticulum membrane</location>
        <topology evidence="1">Single-pass type I membrane protein</topology>
    </subcellularLocation>
</comment>
<comment type="similarity">
    <text evidence="3">Belongs to the ROT1 family.</text>
</comment>
<feature type="signal peptide" evidence="2">
    <location>
        <begin position="1"/>
        <end position="17"/>
    </location>
</feature>
<feature type="chain" id="PRO_0000333414" description="Protein rot1">
    <location>
        <begin position="18"/>
        <end position="236"/>
    </location>
</feature>
<feature type="topological domain" description="Lumenal" evidence="2">
    <location>
        <begin position="18"/>
        <end position="214"/>
    </location>
</feature>
<feature type="transmembrane region" description="Helical" evidence="2">
    <location>
        <begin position="215"/>
        <end position="235"/>
    </location>
</feature>
<feature type="topological domain" description="Cytoplasmic" evidence="2">
    <location>
        <position position="236"/>
    </location>
</feature>
<feature type="glycosylation site" description="N-linked (GlcNAc...) asparagine" evidence="2">
    <location>
        <position position="130"/>
    </location>
</feature>